<accession>A6WJ79</accession>
<dbReference type="EMBL" id="CP000753">
    <property type="protein sequence ID" value="ABS06868.1"/>
    <property type="molecule type" value="Genomic_DNA"/>
</dbReference>
<dbReference type="RefSeq" id="WP_006083044.1">
    <property type="nucleotide sequence ID" value="NC_009665.1"/>
</dbReference>
<dbReference type="SMR" id="A6WJ79"/>
<dbReference type="GeneID" id="11771052"/>
<dbReference type="KEGG" id="sbm:Shew185_0711"/>
<dbReference type="HOGENOM" id="CLU_113441_6_1_6"/>
<dbReference type="GO" id="GO:0022627">
    <property type="term" value="C:cytosolic small ribosomal subunit"/>
    <property type="evidence" value="ECO:0007669"/>
    <property type="project" value="TreeGrafter"/>
</dbReference>
<dbReference type="GO" id="GO:0070181">
    <property type="term" value="F:small ribosomal subunit rRNA binding"/>
    <property type="evidence" value="ECO:0007669"/>
    <property type="project" value="TreeGrafter"/>
</dbReference>
<dbReference type="GO" id="GO:0003735">
    <property type="term" value="F:structural constituent of ribosome"/>
    <property type="evidence" value="ECO:0007669"/>
    <property type="project" value="InterPro"/>
</dbReference>
<dbReference type="GO" id="GO:0006412">
    <property type="term" value="P:translation"/>
    <property type="evidence" value="ECO:0007669"/>
    <property type="project" value="UniProtKB-UniRule"/>
</dbReference>
<dbReference type="CDD" id="cd00473">
    <property type="entry name" value="bS6"/>
    <property type="match status" value="1"/>
</dbReference>
<dbReference type="FunFam" id="3.30.70.60:FF:000003">
    <property type="entry name" value="30S ribosomal protein S6"/>
    <property type="match status" value="1"/>
</dbReference>
<dbReference type="Gene3D" id="3.30.70.60">
    <property type="match status" value="1"/>
</dbReference>
<dbReference type="HAMAP" id="MF_00360">
    <property type="entry name" value="Ribosomal_bS6"/>
    <property type="match status" value="1"/>
</dbReference>
<dbReference type="InterPro" id="IPR000529">
    <property type="entry name" value="Ribosomal_bS6"/>
</dbReference>
<dbReference type="InterPro" id="IPR035980">
    <property type="entry name" value="Ribosomal_bS6_sf"/>
</dbReference>
<dbReference type="InterPro" id="IPR020814">
    <property type="entry name" value="Ribosomal_S6_plastid/chlpt"/>
</dbReference>
<dbReference type="InterPro" id="IPR014717">
    <property type="entry name" value="Transl_elong_EF1B/ribsomal_bS6"/>
</dbReference>
<dbReference type="NCBIfam" id="TIGR00166">
    <property type="entry name" value="S6"/>
    <property type="match status" value="1"/>
</dbReference>
<dbReference type="PANTHER" id="PTHR21011">
    <property type="entry name" value="MITOCHONDRIAL 28S RIBOSOMAL PROTEIN S6"/>
    <property type="match status" value="1"/>
</dbReference>
<dbReference type="PANTHER" id="PTHR21011:SF1">
    <property type="entry name" value="SMALL RIBOSOMAL SUBUNIT PROTEIN BS6M"/>
    <property type="match status" value="1"/>
</dbReference>
<dbReference type="Pfam" id="PF01250">
    <property type="entry name" value="Ribosomal_S6"/>
    <property type="match status" value="1"/>
</dbReference>
<dbReference type="SUPFAM" id="SSF54995">
    <property type="entry name" value="Ribosomal protein S6"/>
    <property type="match status" value="1"/>
</dbReference>
<protein>
    <recommendedName>
        <fullName evidence="1">Small ribosomal subunit protein bS6</fullName>
    </recommendedName>
    <alternativeName>
        <fullName evidence="3">30S ribosomal protein S6</fullName>
    </alternativeName>
</protein>
<evidence type="ECO:0000255" key="1">
    <source>
        <dbReference type="HAMAP-Rule" id="MF_00360"/>
    </source>
</evidence>
<evidence type="ECO:0000256" key="2">
    <source>
        <dbReference type="SAM" id="MobiDB-lite"/>
    </source>
</evidence>
<evidence type="ECO:0000305" key="3"/>
<proteinExistence type="inferred from homology"/>
<keyword id="KW-0687">Ribonucleoprotein</keyword>
<keyword id="KW-0689">Ribosomal protein</keyword>
<keyword id="KW-0694">RNA-binding</keyword>
<keyword id="KW-0699">rRNA-binding</keyword>
<comment type="function">
    <text evidence="1">Binds together with bS18 to 16S ribosomal RNA.</text>
</comment>
<comment type="similarity">
    <text evidence="1">Belongs to the bacterial ribosomal protein bS6 family.</text>
</comment>
<reference key="1">
    <citation type="submission" date="2007-07" db="EMBL/GenBank/DDBJ databases">
        <title>Complete sequence of chromosome of Shewanella baltica OS185.</title>
        <authorList>
            <consortium name="US DOE Joint Genome Institute"/>
            <person name="Copeland A."/>
            <person name="Lucas S."/>
            <person name="Lapidus A."/>
            <person name="Barry K."/>
            <person name="Glavina del Rio T."/>
            <person name="Dalin E."/>
            <person name="Tice H."/>
            <person name="Pitluck S."/>
            <person name="Sims D."/>
            <person name="Brettin T."/>
            <person name="Bruce D."/>
            <person name="Detter J.C."/>
            <person name="Han C."/>
            <person name="Schmutz J."/>
            <person name="Larimer F."/>
            <person name="Land M."/>
            <person name="Hauser L."/>
            <person name="Kyrpides N."/>
            <person name="Mikhailova N."/>
            <person name="Brettar I."/>
            <person name="Rodrigues J."/>
            <person name="Konstantinidis K."/>
            <person name="Tiedje J."/>
            <person name="Richardson P."/>
        </authorList>
    </citation>
    <scope>NUCLEOTIDE SEQUENCE [LARGE SCALE GENOMIC DNA]</scope>
    <source>
        <strain>OS185</strain>
    </source>
</reference>
<feature type="chain" id="PRO_1000005345" description="Small ribosomal subunit protein bS6">
    <location>
        <begin position="1"/>
        <end position="131"/>
    </location>
</feature>
<feature type="region of interest" description="Disordered" evidence="2">
    <location>
        <begin position="97"/>
        <end position="131"/>
    </location>
</feature>
<feature type="compositionally biased region" description="Basic and acidic residues" evidence="2">
    <location>
        <begin position="104"/>
        <end position="131"/>
    </location>
</feature>
<gene>
    <name evidence="1" type="primary">rpsF</name>
    <name type="ordered locus">Shew185_0711</name>
</gene>
<organism>
    <name type="scientific">Shewanella baltica (strain OS185)</name>
    <dbReference type="NCBI Taxonomy" id="402882"/>
    <lineage>
        <taxon>Bacteria</taxon>
        <taxon>Pseudomonadati</taxon>
        <taxon>Pseudomonadota</taxon>
        <taxon>Gammaproteobacteria</taxon>
        <taxon>Alteromonadales</taxon>
        <taxon>Shewanellaceae</taxon>
        <taxon>Shewanella</taxon>
    </lineage>
</organism>
<name>RS6_SHEB8</name>
<sequence length="131" mass="15113">MRHYEIVFMVHPDQSEQVPGMIERYTGVITEANGTIHRLEDWGRRQLAYPILDLHKAHYVLMNVEAKAETIEELETAFRFNDAVLRNMVMRTKVAVTEASPMAKARDERDSRRGPAGERSYDEAHAEEIAE</sequence>